<protein>
    <recommendedName>
        <fullName evidence="2">Type VII secretion system extracellular protein A</fullName>
        <shortName evidence="2">Ess extracellular protein A</shortName>
    </recommendedName>
</protein>
<gene>
    <name evidence="2" type="primary">esxA</name>
    <name type="ordered locus">SAR0279</name>
</gene>
<dbReference type="EMBL" id="BX571856">
    <property type="protein sequence ID" value="CAG39306.1"/>
    <property type="molecule type" value="Genomic_DNA"/>
</dbReference>
<dbReference type="RefSeq" id="WP_001240826.1">
    <property type="nucleotide sequence ID" value="NC_002952.2"/>
</dbReference>
<dbReference type="SMR" id="Q6GK29"/>
<dbReference type="GeneID" id="98344606"/>
<dbReference type="KEGG" id="sar:SAR0279"/>
<dbReference type="HOGENOM" id="CLU_158563_4_0_9"/>
<dbReference type="Proteomes" id="UP000000596">
    <property type="component" value="Chromosome"/>
</dbReference>
<dbReference type="GO" id="GO:0005576">
    <property type="term" value="C:extracellular region"/>
    <property type="evidence" value="ECO:0007669"/>
    <property type="project" value="UniProtKB-SubCell"/>
</dbReference>
<dbReference type="Gene3D" id="1.10.287.1060">
    <property type="entry name" value="ESAT-6-like"/>
    <property type="match status" value="1"/>
</dbReference>
<dbReference type="InterPro" id="IPR036689">
    <property type="entry name" value="ESAT-6-like_sf"/>
</dbReference>
<dbReference type="InterPro" id="IPR010310">
    <property type="entry name" value="T7SS_ESAT-6-like"/>
</dbReference>
<dbReference type="NCBIfam" id="TIGR03930">
    <property type="entry name" value="WXG100_ESAT6"/>
    <property type="match status" value="1"/>
</dbReference>
<dbReference type="Pfam" id="PF06013">
    <property type="entry name" value="WXG100"/>
    <property type="match status" value="1"/>
</dbReference>
<dbReference type="SUPFAM" id="SSF140453">
    <property type="entry name" value="EsxAB dimer-like"/>
    <property type="match status" value="1"/>
</dbReference>
<keyword id="KW-0175">Coiled coil</keyword>
<keyword id="KW-0964">Secreted</keyword>
<keyword id="KW-0843">Virulence</keyword>
<comment type="function">
    <text evidence="1 2">Virulence factor that is important for the establishment of infection in the host. EsxA is required for EsxB synthesis as well as secretion (By similarity). Modulates host cell apoptotic pathways and mediates together with EsxB the release of S.aureus from the host cell. By acting on apoptosis, plays a role in the modulation of dendritic cell-mediated immunity (By similarity).</text>
</comment>
<comment type="subcellular location">
    <subcellularLocation>
        <location evidence="2">Secreted</location>
    </subcellularLocation>
    <text evidence="2">Secreted via the ESAT-6 secretion system (Ess) / type VII secretion system (T7SS).</text>
</comment>
<comment type="miscellaneous">
    <text evidence="4">This strain lacks esxB and esxC.</text>
</comment>
<comment type="similarity">
    <text evidence="4">Belongs to the WXG100 family. sagEsxA-like subfamily.</text>
</comment>
<name>ESXA_STAAR</name>
<evidence type="ECO:0000250" key="1">
    <source>
        <dbReference type="UniProtKB" id="A0A0H2XI99"/>
    </source>
</evidence>
<evidence type="ECO:0000250" key="2">
    <source>
        <dbReference type="UniProtKB" id="P0C046"/>
    </source>
</evidence>
<evidence type="ECO:0000255" key="3"/>
<evidence type="ECO:0000305" key="4"/>
<accession>Q6GK29</accession>
<reference key="1">
    <citation type="journal article" date="2004" name="Proc. Natl. Acad. Sci. U.S.A.">
        <title>Complete genomes of two clinical Staphylococcus aureus strains: evidence for the rapid evolution of virulence and drug resistance.</title>
        <authorList>
            <person name="Holden M.T.G."/>
            <person name="Feil E.J."/>
            <person name="Lindsay J.A."/>
            <person name="Peacock S.J."/>
            <person name="Day N.P.J."/>
            <person name="Enright M.C."/>
            <person name="Foster T.J."/>
            <person name="Moore C.E."/>
            <person name="Hurst L."/>
            <person name="Atkin R."/>
            <person name="Barron A."/>
            <person name="Bason N."/>
            <person name="Bentley S.D."/>
            <person name="Chillingworth C."/>
            <person name="Chillingworth T."/>
            <person name="Churcher C."/>
            <person name="Clark L."/>
            <person name="Corton C."/>
            <person name="Cronin A."/>
            <person name="Doggett J."/>
            <person name="Dowd L."/>
            <person name="Feltwell T."/>
            <person name="Hance Z."/>
            <person name="Harris B."/>
            <person name="Hauser H."/>
            <person name="Holroyd S."/>
            <person name="Jagels K."/>
            <person name="James K.D."/>
            <person name="Lennard N."/>
            <person name="Line A."/>
            <person name="Mayes R."/>
            <person name="Moule S."/>
            <person name="Mungall K."/>
            <person name="Ormond D."/>
            <person name="Quail M.A."/>
            <person name="Rabbinowitsch E."/>
            <person name="Rutherford K.M."/>
            <person name="Sanders M."/>
            <person name="Sharp S."/>
            <person name="Simmonds M."/>
            <person name="Stevens K."/>
            <person name="Whitehead S."/>
            <person name="Barrell B.G."/>
            <person name="Spratt B.G."/>
            <person name="Parkhill J."/>
        </authorList>
    </citation>
    <scope>NUCLEOTIDE SEQUENCE [LARGE SCALE GENOMIC DNA]</scope>
    <source>
        <strain>MRSA252</strain>
    </source>
</reference>
<organism>
    <name type="scientific">Staphylococcus aureus (strain MRSA252)</name>
    <dbReference type="NCBI Taxonomy" id="282458"/>
    <lineage>
        <taxon>Bacteria</taxon>
        <taxon>Bacillati</taxon>
        <taxon>Bacillota</taxon>
        <taxon>Bacilli</taxon>
        <taxon>Bacillales</taxon>
        <taxon>Staphylococcaceae</taxon>
        <taxon>Staphylococcus</taxon>
    </lineage>
</organism>
<proteinExistence type="inferred from homology"/>
<feature type="chain" id="PRO_0000167826" description="Type VII secretion system extracellular protein A">
    <location>
        <begin position="1"/>
        <end position="97"/>
    </location>
</feature>
<feature type="coiled-coil region" evidence="3">
    <location>
        <begin position="61"/>
        <end position="93"/>
    </location>
</feature>
<sequence length="97" mass="11036">MAMIKMSPEEIRAKSQSYGQGSDQIRQILSDLTRAQGEIAANWEGQAFSRFEEQFQQLSPKVEKFAQLLEEIKQQLNSTADAVQEQDQQLSNNFGLQ</sequence>